<dbReference type="EMBL" id="AE008922">
    <property type="protein sequence ID" value="AAM41760.1"/>
    <property type="molecule type" value="Genomic_DNA"/>
</dbReference>
<dbReference type="RefSeq" id="NP_637836.1">
    <property type="nucleotide sequence ID" value="NC_003902.1"/>
</dbReference>
<dbReference type="RefSeq" id="WP_011037621.1">
    <property type="nucleotide sequence ID" value="NC_003902.1"/>
</dbReference>
<dbReference type="SMR" id="Q8P7X1"/>
<dbReference type="STRING" id="190485.XCC2485"/>
<dbReference type="EnsemblBacteria" id="AAM41760">
    <property type="protein sequence ID" value="AAM41760"/>
    <property type="gene ID" value="XCC2485"/>
</dbReference>
<dbReference type="KEGG" id="xcc:XCC2485"/>
<dbReference type="PATRIC" id="fig|190485.4.peg.2652"/>
<dbReference type="eggNOG" id="COG0556">
    <property type="taxonomic scope" value="Bacteria"/>
</dbReference>
<dbReference type="HOGENOM" id="CLU_009621_2_1_6"/>
<dbReference type="OrthoDB" id="9806651at2"/>
<dbReference type="Proteomes" id="UP000001010">
    <property type="component" value="Chromosome"/>
</dbReference>
<dbReference type="GO" id="GO:0005737">
    <property type="term" value="C:cytoplasm"/>
    <property type="evidence" value="ECO:0007669"/>
    <property type="project" value="UniProtKB-SubCell"/>
</dbReference>
<dbReference type="GO" id="GO:0009380">
    <property type="term" value="C:excinuclease repair complex"/>
    <property type="evidence" value="ECO:0000318"/>
    <property type="project" value="GO_Central"/>
</dbReference>
<dbReference type="GO" id="GO:0005524">
    <property type="term" value="F:ATP binding"/>
    <property type="evidence" value="ECO:0007669"/>
    <property type="project" value="UniProtKB-UniRule"/>
</dbReference>
<dbReference type="GO" id="GO:0016887">
    <property type="term" value="F:ATP hydrolysis activity"/>
    <property type="evidence" value="ECO:0007669"/>
    <property type="project" value="InterPro"/>
</dbReference>
<dbReference type="GO" id="GO:0003677">
    <property type="term" value="F:DNA binding"/>
    <property type="evidence" value="ECO:0007669"/>
    <property type="project" value="UniProtKB-UniRule"/>
</dbReference>
<dbReference type="GO" id="GO:0009381">
    <property type="term" value="F:excinuclease ABC activity"/>
    <property type="evidence" value="ECO:0007669"/>
    <property type="project" value="UniProtKB-UniRule"/>
</dbReference>
<dbReference type="GO" id="GO:0000715">
    <property type="term" value="P:nucleotide-excision repair, DNA damage recognition"/>
    <property type="evidence" value="ECO:0000318"/>
    <property type="project" value="GO_Central"/>
</dbReference>
<dbReference type="GO" id="GO:0009432">
    <property type="term" value="P:SOS response"/>
    <property type="evidence" value="ECO:0007669"/>
    <property type="project" value="UniProtKB-UniRule"/>
</dbReference>
<dbReference type="CDD" id="cd17916">
    <property type="entry name" value="DEXHc_UvrB"/>
    <property type="match status" value="1"/>
</dbReference>
<dbReference type="CDD" id="cd18790">
    <property type="entry name" value="SF2_C_UvrB"/>
    <property type="match status" value="1"/>
</dbReference>
<dbReference type="FunFam" id="3.40.50.300:FF:000477">
    <property type="entry name" value="UvrABC system protein B"/>
    <property type="match status" value="1"/>
</dbReference>
<dbReference type="Gene3D" id="6.10.140.240">
    <property type="match status" value="1"/>
</dbReference>
<dbReference type="Gene3D" id="3.40.50.300">
    <property type="entry name" value="P-loop containing nucleotide triphosphate hydrolases"/>
    <property type="match status" value="3"/>
</dbReference>
<dbReference type="Gene3D" id="4.10.860.10">
    <property type="entry name" value="UVR domain"/>
    <property type="match status" value="1"/>
</dbReference>
<dbReference type="HAMAP" id="MF_00204">
    <property type="entry name" value="UvrB"/>
    <property type="match status" value="1"/>
</dbReference>
<dbReference type="InterPro" id="IPR006935">
    <property type="entry name" value="Helicase/UvrB_N"/>
</dbReference>
<dbReference type="InterPro" id="IPR014001">
    <property type="entry name" value="Helicase_ATP-bd"/>
</dbReference>
<dbReference type="InterPro" id="IPR001650">
    <property type="entry name" value="Helicase_C-like"/>
</dbReference>
<dbReference type="InterPro" id="IPR027417">
    <property type="entry name" value="P-loop_NTPase"/>
</dbReference>
<dbReference type="InterPro" id="IPR001943">
    <property type="entry name" value="UVR_dom"/>
</dbReference>
<dbReference type="InterPro" id="IPR036876">
    <property type="entry name" value="UVR_dom_sf"/>
</dbReference>
<dbReference type="InterPro" id="IPR004807">
    <property type="entry name" value="UvrB"/>
</dbReference>
<dbReference type="InterPro" id="IPR041471">
    <property type="entry name" value="UvrB_inter"/>
</dbReference>
<dbReference type="InterPro" id="IPR024759">
    <property type="entry name" value="UvrB_YAD/RRR_dom"/>
</dbReference>
<dbReference type="NCBIfam" id="NF003673">
    <property type="entry name" value="PRK05298.1"/>
    <property type="match status" value="1"/>
</dbReference>
<dbReference type="NCBIfam" id="TIGR00631">
    <property type="entry name" value="uvrb"/>
    <property type="match status" value="1"/>
</dbReference>
<dbReference type="PANTHER" id="PTHR24029">
    <property type="entry name" value="UVRABC SYSTEM PROTEIN B"/>
    <property type="match status" value="1"/>
</dbReference>
<dbReference type="PANTHER" id="PTHR24029:SF0">
    <property type="entry name" value="UVRABC SYSTEM PROTEIN B"/>
    <property type="match status" value="1"/>
</dbReference>
<dbReference type="Pfam" id="PF00271">
    <property type="entry name" value="Helicase_C"/>
    <property type="match status" value="1"/>
</dbReference>
<dbReference type="Pfam" id="PF04851">
    <property type="entry name" value="ResIII"/>
    <property type="match status" value="1"/>
</dbReference>
<dbReference type="Pfam" id="PF02151">
    <property type="entry name" value="UVR"/>
    <property type="match status" value="1"/>
</dbReference>
<dbReference type="Pfam" id="PF12344">
    <property type="entry name" value="UvrB"/>
    <property type="match status" value="1"/>
</dbReference>
<dbReference type="Pfam" id="PF17757">
    <property type="entry name" value="UvrB_inter"/>
    <property type="match status" value="1"/>
</dbReference>
<dbReference type="SMART" id="SM00487">
    <property type="entry name" value="DEXDc"/>
    <property type="match status" value="1"/>
</dbReference>
<dbReference type="SMART" id="SM00490">
    <property type="entry name" value="HELICc"/>
    <property type="match status" value="1"/>
</dbReference>
<dbReference type="SUPFAM" id="SSF46600">
    <property type="entry name" value="C-terminal UvrC-binding domain of UvrB"/>
    <property type="match status" value="1"/>
</dbReference>
<dbReference type="SUPFAM" id="SSF52540">
    <property type="entry name" value="P-loop containing nucleoside triphosphate hydrolases"/>
    <property type="match status" value="2"/>
</dbReference>
<dbReference type="PROSITE" id="PS51192">
    <property type="entry name" value="HELICASE_ATP_BIND_1"/>
    <property type="match status" value="1"/>
</dbReference>
<dbReference type="PROSITE" id="PS51194">
    <property type="entry name" value="HELICASE_CTER"/>
    <property type="match status" value="1"/>
</dbReference>
<dbReference type="PROSITE" id="PS50151">
    <property type="entry name" value="UVR"/>
    <property type="match status" value="1"/>
</dbReference>
<keyword id="KW-0067">ATP-binding</keyword>
<keyword id="KW-0963">Cytoplasm</keyword>
<keyword id="KW-0227">DNA damage</keyword>
<keyword id="KW-0228">DNA excision</keyword>
<keyword id="KW-0234">DNA repair</keyword>
<keyword id="KW-0267">Excision nuclease</keyword>
<keyword id="KW-0547">Nucleotide-binding</keyword>
<keyword id="KW-1185">Reference proteome</keyword>
<keyword id="KW-0742">SOS response</keyword>
<evidence type="ECO:0000255" key="1">
    <source>
        <dbReference type="HAMAP-Rule" id="MF_00204"/>
    </source>
</evidence>
<evidence type="ECO:0000256" key="2">
    <source>
        <dbReference type="SAM" id="MobiDB-lite"/>
    </source>
</evidence>
<gene>
    <name evidence="1" type="primary">uvrB</name>
    <name type="ordered locus">XCC2485</name>
</gene>
<reference key="1">
    <citation type="journal article" date="2002" name="Nature">
        <title>Comparison of the genomes of two Xanthomonas pathogens with differing host specificities.</title>
        <authorList>
            <person name="da Silva A.C.R."/>
            <person name="Ferro J.A."/>
            <person name="Reinach F.C."/>
            <person name="Farah C.S."/>
            <person name="Furlan L.R."/>
            <person name="Quaggio R.B."/>
            <person name="Monteiro-Vitorello C.B."/>
            <person name="Van Sluys M.A."/>
            <person name="Almeida N.F. Jr."/>
            <person name="Alves L.M.C."/>
            <person name="do Amaral A.M."/>
            <person name="Bertolini M.C."/>
            <person name="Camargo L.E.A."/>
            <person name="Camarotte G."/>
            <person name="Cannavan F."/>
            <person name="Cardozo J."/>
            <person name="Chambergo F."/>
            <person name="Ciapina L.P."/>
            <person name="Cicarelli R.M.B."/>
            <person name="Coutinho L.L."/>
            <person name="Cursino-Santos J.R."/>
            <person name="El-Dorry H."/>
            <person name="Faria J.B."/>
            <person name="Ferreira A.J.S."/>
            <person name="Ferreira R.C.C."/>
            <person name="Ferro M.I.T."/>
            <person name="Formighieri E.F."/>
            <person name="Franco M.C."/>
            <person name="Greggio C.C."/>
            <person name="Gruber A."/>
            <person name="Katsuyama A.M."/>
            <person name="Kishi L.T."/>
            <person name="Leite R.P."/>
            <person name="Lemos E.G.M."/>
            <person name="Lemos M.V.F."/>
            <person name="Locali E.C."/>
            <person name="Machado M.A."/>
            <person name="Madeira A.M.B.N."/>
            <person name="Martinez-Rossi N.M."/>
            <person name="Martins E.C."/>
            <person name="Meidanis J."/>
            <person name="Menck C.F.M."/>
            <person name="Miyaki C.Y."/>
            <person name="Moon D.H."/>
            <person name="Moreira L.M."/>
            <person name="Novo M.T.M."/>
            <person name="Okura V.K."/>
            <person name="Oliveira M.C."/>
            <person name="Oliveira V.R."/>
            <person name="Pereira H.A."/>
            <person name="Rossi A."/>
            <person name="Sena J.A.D."/>
            <person name="Silva C."/>
            <person name="de Souza R.F."/>
            <person name="Spinola L.A.F."/>
            <person name="Takita M.A."/>
            <person name="Tamura R.E."/>
            <person name="Teixeira E.C."/>
            <person name="Tezza R.I.D."/>
            <person name="Trindade dos Santos M."/>
            <person name="Truffi D."/>
            <person name="Tsai S.M."/>
            <person name="White F.F."/>
            <person name="Setubal J.C."/>
            <person name="Kitajima J.P."/>
        </authorList>
    </citation>
    <scope>NUCLEOTIDE SEQUENCE [LARGE SCALE GENOMIC DNA]</scope>
    <source>
        <strain>ATCC 33913 / DSM 3586 / NCPPB 528 / LMG 568 / P 25</strain>
    </source>
</reference>
<accession>Q8P7X1</accession>
<organism>
    <name type="scientific">Xanthomonas campestris pv. campestris (strain ATCC 33913 / DSM 3586 / NCPPB 528 / LMG 568 / P 25)</name>
    <dbReference type="NCBI Taxonomy" id="190485"/>
    <lineage>
        <taxon>Bacteria</taxon>
        <taxon>Pseudomonadati</taxon>
        <taxon>Pseudomonadota</taxon>
        <taxon>Gammaproteobacteria</taxon>
        <taxon>Lysobacterales</taxon>
        <taxon>Lysobacteraceae</taxon>
        <taxon>Xanthomonas</taxon>
    </lineage>
</organism>
<sequence length="673" mass="75826">MTDRFELVSPYSPAGDQPAAIDKLVANFEAGLAKQTLLGVTGSGKTYTIANVVQQVQKPTLVMAPNKTLAAQLYGEFKSFFPNNAVEYFVSYYDYYQPEAYVPSSDTFIEKDSSINEHIEQMRLSATKTLLSRRDSLVVATVSAIYGLGAPEDYLSLRLILSIGEHIDQRQLIRHLTDLQYTRNEFELTRGAFRVRGEVLDVFPAESDTEALRIELFDGDIEQLTLFDPLTGETLRKLQRYTVYPKTHYATTRERTLSAVDTIKEELKERLEQLYSQNKLVEAQRLAQRTQFDLEMMAEVGFCNGIENYSRHLTGKAPGEPPPTLFDYLPPDALLVIDESHVTIPQIGAMYKGDRSRKETLVEFGFRLPSALDNRPLRFEEWEARSPRSIYVSATPGPYELRESAGEITELVVRPTGLIDPVVEIRPVGTQVDDLMSEVHERIKLGDRVLVTTLTKRMAENLTEYLGEHGIRVRYLHSDIDTVERVEIIRDLRLGKFDVLVGINLLREGLDMPEVSLVAILDADKEGFLRSTGSLIQTIGRAARNLRGKAILYADKMTRSMQAAIDETDRRREKQVEYNLEHGITPKSVARPISDIMEGAREDAAEKKAGKGRSKSRQVAEEPADYRAMGPAEIAGKLKALEQKMYQHAKDLEFEAAAQIRDQILKLKAASLA</sequence>
<feature type="chain" id="PRO_0000138448" description="UvrABC system protein B">
    <location>
        <begin position="1"/>
        <end position="673"/>
    </location>
</feature>
<feature type="domain" description="Helicase ATP-binding" evidence="1">
    <location>
        <begin position="26"/>
        <end position="414"/>
    </location>
</feature>
<feature type="domain" description="Helicase C-terminal" evidence="1">
    <location>
        <begin position="431"/>
        <end position="597"/>
    </location>
</feature>
<feature type="domain" description="UVR" evidence="1">
    <location>
        <begin position="635"/>
        <end position="670"/>
    </location>
</feature>
<feature type="region of interest" description="Disordered" evidence="2">
    <location>
        <begin position="601"/>
        <end position="626"/>
    </location>
</feature>
<feature type="short sequence motif" description="Beta-hairpin">
    <location>
        <begin position="92"/>
        <end position="115"/>
    </location>
</feature>
<feature type="binding site" evidence="1">
    <location>
        <begin position="39"/>
        <end position="46"/>
    </location>
    <ligand>
        <name>ATP</name>
        <dbReference type="ChEBI" id="CHEBI:30616"/>
    </ligand>
</feature>
<proteinExistence type="inferred from homology"/>
<name>UVRB_XANCP</name>
<protein>
    <recommendedName>
        <fullName evidence="1">UvrABC system protein B</fullName>
        <shortName evidence="1">Protein UvrB</shortName>
    </recommendedName>
    <alternativeName>
        <fullName evidence="1">Excinuclease ABC subunit B</fullName>
    </alternativeName>
</protein>
<comment type="function">
    <text evidence="1">The UvrABC repair system catalyzes the recognition and processing of DNA lesions. A damage recognition complex composed of 2 UvrA and 2 UvrB subunits scans DNA for abnormalities. Upon binding of the UvrA(2)B(2) complex to a putative damaged site, the DNA wraps around one UvrB monomer. DNA wrap is dependent on ATP binding by UvrB and probably causes local melting of the DNA helix, facilitating insertion of UvrB beta-hairpin between the DNA strands. Then UvrB probes one DNA strand for the presence of a lesion. If a lesion is found the UvrA subunits dissociate and the UvrB-DNA preincision complex is formed. This complex is subsequently bound by UvrC and the second UvrB is released. If no lesion is found, the DNA wraps around the other UvrB subunit that will check the other stand for damage.</text>
</comment>
<comment type="subunit">
    <text evidence="1">Forms a heterotetramer with UvrA during the search for lesions. Interacts with UvrC in an incision complex.</text>
</comment>
<comment type="subcellular location">
    <subcellularLocation>
        <location evidence="1">Cytoplasm</location>
    </subcellularLocation>
</comment>
<comment type="domain">
    <text evidence="1">The beta-hairpin motif is involved in DNA binding.</text>
</comment>
<comment type="similarity">
    <text evidence="1">Belongs to the UvrB family.</text>
</comment>